<accession>A6MM32</accession>
<feature type="propeptide" id="PRO_0000431116" evidence="1">
    <location>
        <begin position="1"/>
        <end position="14"/>
    </location>
</feature>
<feature type="chain" id="PRO_0000361329" description="Photosystem II CP43 reaction center protein" evidence="1">
    <location>
        <begin position="15"/>
        <end position="473"/>
    </location>
</feature>
<feature type="transmembrane region" description="Helical" evidence="1">
    <location>
        <begin position="69"/>
        <end position="93"/>
    </location>
</feature>
<feature type="transmembrane region" description="Helical" evidence="1">
    <location>
        <begin position="134"/>
        <end position="155"/>
    </location>
</feature>
<feature type="transmembrane region" description="Helical" evidence="1">
    <location>
        <begin position="178"/>
        <end position="200"/>
    </location>
</feature>
<feature type="transmembrane region" description="Helical" evidence="1">
    <location>
        <begin position="255"/>
        <end position="275"/>
    </location>
</feature>
<feature type="transmembrane region" description="Helical" evidence="1">
    <location>
        <begin position="291"/>
        <end position="312"/>
    </location>
</feature>
<feature type="transmembrane region" description="Helical" evidence="1">
    <location>
        <begin position="447"/>
        <end position="471"/>
    </location>
</feature>
<feature type="binding site" evidence="1">
    <location>
        <position position="367"/>
    </location>
    <ligand>
        <name>[CaMn4O5] cluster</name>
        <dbReference type="ChEBI" id="CHEBI:189552"/>
    </ligand>
</feature>
<feature type="modified residue" description="N-acetylthreonine" evidence="1">
    <location>
        <position position="15"/>
    </location>
</feature>
<feature type="modified residue" description="Phosphothreonine" evidence="1">
    <location>
        <position position="15"/>
    </location>
</feature>
<reference key="1">
    <citation type="journal article" date="2007" name="Mol. Phylogenet. Evol.">
        <title>Phylogenetic and evolutionary implications of complete chloroplast genome sequences of four early-diverging angiosperms: Buxus (Buxaceae), Chloranthus (Chloranthaceae), Dioscorea (Dioscoreaceae), and Illicium (Schisandraceae).</title>
        <authorList>
            <person name="Hansen D.R."/>
            <person name="Dastidar S.G."/>
            <person name="Cai Z."/>
            <person name="Penaflor C."/>
            <person name="Kuehl J.V."/>
            <person name="Boore J.L."/>
            <person name="Jansen R.K."/>
        </authorList>
    </citation>
    <scope>NUCLEOTIDE SEQUENCE [LARGE SCALE GENOMIC DNA]</scope>
</reference>
<comment type="function">
    <text evidence="1">One of the components of the core complex of photosystem II (PSII). It binds chlorophyll and helps catalyze the primary light-induced photochemical processes of PSII. PSII is a light-driven water:plastoquinone oxidoreductase, using light energy to abstract electrons from H(2)O, generating O(2) and a proton gradient subsequently used for ATP formation.</text>
</comment>
<comment type="cofactor">
    <text evidence="1">Binds multiple chlorophylls and provides some of the ligands for the Ca-4Mn-5O cluster of the oxygen-evolving complex. It may also provide a ligand for a Cl- that is required for oxygen evolution. PSII binds additional chlorophylls, carotenoids and specific lipids.</text>
</comment>
<comment type="subunit">
    <text evidence="1">PSII is composed of 1 copy each of membrane proteins PsbA, PsbB, PsbC, PsbD, PsbE, PsbF, PsbH, PsbI, PsbJ, PsbK, PsbL, PsbM, PsbT, PsbX, PsbY, PsbZ, Psb30/Ycf12, at least 3 peripheral proteins of the oxygen-evolving complex and a large number of cofactors. It forms dimeric complexes.</text>
</comment>
<comment type="subcellular location">
    <subcellularLocation>
        <location evidence="1">Plastid</location>
        <location evidence="1">Chloroplast thylakoid membrane</location>
        <topology evidence="1">Multi-pass membrane protein</topology>
    </subcellularLocation>
</comment>
<comment type="similarity">
    <text evidence="1">Belongs to the PsbB/PsbC family. PsbC subfamily.</text>
</comment>
<name>PSBC_BUXMI</name>
<proteinExistence type="inferred from homology"/>
<gene>
    <name evidence="1" type="primary">psbC</name>
</gene>
<dbReference type="EMBL" id="EF380351">
    <property type="protein sequence ID" value="ABQ45245.1"/>
    <property type="molecule type" value="Genomic_DNA"/>
</dbReference>
<dbReference type="RefSeq" id="YP_001294180.1">
    <property type="nucleotide sequence ID" value="NC_009599.1"/>
</dbReference>
<dbReference type="SMR" id="A6MM32"/>
<dbReference type="GeneID" id="5236922"/>
<dbReference type="GO" id="GO:0009535">
    <property type="term" value="C:chloroplast thylakoid membrane"/>
    <property type="evidence" value="ECO:0007669"/>
    <property type="project" value="UniProtKB-SubCell"/>
</dbReference>
<dbReference type="GO" id="GO:0009523">
    <property type="term" value="C:photosystem II"/>
    <property type="evidence" value="ECO:0007669"/>
    <property type="project" value="UniProtKB-KW"/>
</dbReference>
<dbReference type="GO" id="GO:0016168">
    <property type="term" value="F:chlorophyll binding"/>
    <property type="evidence" value="ECO:0007669"/>
    <property type="project" value="UniProtKB-UniRule"/>
</dbReference>
<dbReference type="GO" id="GO:0045156">
    <property type="term" value="F:electron transporter, transferring electrons within the cyclic electron transport pathway of photosynthesis activity"/>
    <property type="evidence" value="ECO:0007669"/>
    <property type="project" value="InterPro"/>
</dbReference>
<dbReference type="GO" id="GO:0046872">
    <property type="term" value="F:metal ion binding"/>
    <property type="evidence" value="ECO:0007669"/>
    <property type="project" value="UniProtKB-KW"/>
</dbReference>
<dbReference type="GO" id="GO:0009772">
    <property type="term" value="P:photosynthetic electron transport in photosystem II"/>
    <property type="evidence" value="ECO:0007669"/>
    <property type="project" value="InterPro"/>
</dbReference>
<dbReference type="FunFam" id="1.10.10.670:FF:000001">
    <property type="entry name" value="Photosystem II CP43 reaction center protein"/>
    <property type="match status" value="1"/>
</dbReference>
<dbReference type="Gene3D" id="1.10.10.670">
    <property type="entry name" value="photosystem ii from thermosynechococcus elongatus"/>
    <property type="match status" value="1"/>
</dbReference>
<dbReference type="HAMAP" id="MF_01496">
    <property type="entry name" value="PSII_PsbC_CP43"/>
    <property type="match status" value="1"/>
</dbReference>
<dbReference type="InterPro" id="IPR000932">
    <property type="entry name" value="PS_antenna-like"/>
</dbReference>
<dbReference type="InterPro" id="IPR036001">
    <property type="entry name" value="PS_II_antenna-like_sf"/>
</dbReference>
<dbReference type="InterPro" id="IPR005869">
    <property type="entry name" value="PSII_PsbC"/>
</dbReference>
<dbReference type="InterPro" id="IPR044900">
    <property type="entry name" value="PSII_PsbC_sf"/>
</dbReference>
<dbReference type="NCBIfam" id="TIGR01153">
    <property type="entry name" value="psbC"/>
    <property type="match status" value="1"/>
</dbReference>
<dbReference type="Pfam" id="PF00421">
    <property type="entry name" value="PSII"/>
    <property type="match status" value="1"/>
</dbReference>
<dbReference type="SUPFAM" id="SSF161077">
    <property type="entry name" value="Photosystem II antenna protein-like"/>
    <property type="match status" value="1"/>
</dbReference>
<organism>
    <name type="scientific">Buxus microphylla</name>
    <name type="common">Littleleaf boxwood</name>
    <name type="synonym">Japanese boxwood</name>
    <dbReference type="NCBI Taxonomy" id="153571"/>
    <lineage>
        <taxon>Eukaryota</taxon>
        <taxon>Viridiplantae</taxon>
        <taxon>Streptophyta</taxon>
        <taxon>Embryophyta</taxon>
        <taxon>Tracheophyta</taxon>
        <taxon>Spermatophyta</taxon>
        <taxon>Magnoliopsida</taxon>
        <taxon>Buxales</taxon>
        <taxon>Buxaceae</taxon>
        <taxon>Buxus</taxon>
    </lineage>
</organism>
<evidence type="ECO:0000255" key="1">
    <source>
        <dbReference type="HAMAP-Rule" id="MF_01496"/>
    </source>
</evidence>
<geneLocation type="chloroplast"/>
<protein>
    <recommendedName>
        <fullName evidence="1">Photosystem II CP43 reaction center protein</fullName>
    </recommendedName>
    <alternativeName>
        <fullName evidence="1">PSII 43 kDa protein</fullName>
    </alternativeName>
    <alternativeName>
        <fullName evidence="1">Protein CP-43</fullName>
    </alternativeName>
</protein>
<sequence>MKTLYSLRRFYPVETLFNGTLALAGRDQETTGFAWWAGNARLINLSGKLLGAHVAHAGLIVFWAGAMNLFEVAHFVPEKPMYEQGLILLPHLATLGWGVGPGGEVIDTFPYFVSGVLHLISSAVLGFGGIYHALLGPETLEESFPFFGYVWKDRNKMTTILGIHLILLGIGAFLLVLKALYFGGVYDTWAPGGGDVRKITNLTLSPSVIFGYLLKSPFGGEGWIVSVDDLEDIIGGHVWLGSICIVGGIWHILTKPFAWARRALVWSGEAYLSYSLGALSVFGFIACCFVWFNNTAYPSEFYGPTGPEASQAQAFTFLVRDQRLGANVGSAQGPTGLGKYLMRSPTGEVIFGGETMRFWDLRAPWLEPLRGPNGLDLSRLKKDIQPWQERRSAEYMTHAPLGSLNSVGGVATEINAVNYVSPRSWLATSHFVLGFFLFVGHLWHAGRARAAAAGFEKGIDRDFEPVLSMTPLN</sequence>
<keyword id="KW-0007">Acetylation</keyword>
<keyword id="KW-0148">Chlorophyll</keyword>
<keyword id="KW-0150">Chloroplast</keyword>
<keyword id="KW-0157">Chromophore</keyword>
<keyword id="KW-0464">Manganese</keyword>
<keyword id="KW-0472">Membrane</keyword>
<keyword id="KW-0479">Metal-binding</keyword>
<keyword id="KW-0597">Phosphoprotein</keyword>
<keyword id="KW-0602">Photosynthesis</keyword>
<keyword id="KW-0604">Photosystem II</keyword>
<keyword id="KW-0934">Plastid</keyword>
<keyword id="KW-0793">Thylakoid</keyword>
<keyword id="KW-0812">Transmembrane</keyword>
<keyword id="KW-1133">Transmembrane helix</keyword>